<evidence type="ECO:0000255" key="1"/>
<evidence type="ECO:0000256" key="2">
    <source>
        <dbReference type="SAM" id="MobiDB-lite"/>
    </source>
</evidence>
<name>Y135_AFV1Y</name>
<organismHost>
    <name type="scientific">Acidianus hospitalis</name>
    <dbReference type="NCBI Taxonomy" id="563177"/>
</organismHost>
<organismHost>
    <name type="scientific">Acidianus infernus</name>
    <dbReference type="NCBI Taxonomy" id="12915"/>
</organismHost>
<reference key="1">
    <citation type="journal article" date="2003" name="Virology">
        <title>AFV1, a novel virus infecting hyperthermophilic archaea of the genus acidianus.</title>
        <authorList>
            <person name="Bettstetter M."/>
            <person name="Peng X."/>
            <person name="Garrett R.A."/>
            <person name="Prangishvili D."/>
        </authorList>
    </citation>
    <scope>NUCLEOTIDE SEQUENCE [GENOMIC DNA]</scope>
</reference>
<dbReference type="EMBL" id="AJ567472">
    <property type="protein sequence ID" value="CAD98943.1"/>
    <property type="molecule type" value="Genomic_DNA"/>
</dbReference>
<dbReference type="RefSeq" id="YP_003739.1">
    <property type="nucleotide sequence ID" value="NC_005830.1"/>
</dbReference>
<dbReference type="KEGG" id="vg:2769177"/>
<dbReference type="Proteomes" id="UP000000514">
    <property type="component" value="Genome"/>
</dbReference>
<dbReference type="InterPro" id="IPR048991">
    <property type="entry name" value="PHA01746-like_dom"/>
</dbReference>
<dbReference type="Pfam" id="PF21017">
    <property type="entry name" value="PHA01746"/>
    <property type="match status" value="1"/>
</dbReference>
<protein>
    <recommendedName>
        <fullName>Uncharacterized protein ORF135</fullName>
    </recommendedName>
</protein>
<proteinExistence type="predicted"/>
<accession>Q70LD7</accession>
<gene>
    <name type="ORF">ORF135</name>
</gene>
<keyword id="KW-0175">Coiled coil</keyword>
<keyword id="KW-1185">Reference proteome</keyword>
<feature type="chain" id="PRO_0000384556" description="Uncharacterized protein ORF135">
    <location>
        <begin position="1"/>
        <end position="135"/>
    </location>
</feature>
<feature type="region of interest" description="Disordered" evidence="2">
    <location>
        <begin position="88"/>
        <end position="135"/>
    </location>
</feature>
<feature type="coiled-coil region" evidence="1">
    <location>
        <begin position="68"/>
        <end position="135"/>
    </location>
</feature>
<feature type="compositionally biased region" description="Acidic residues" evidence="2">
    <location>
        <begin position="102"/>
        <end position="117"/>
    </location>
</feature>
<feature type="compositionally biased region" description="Basic and acidic residues" evidence="2">
    <location>
        <begin position="118"/>
        <end position="129"/>
    </location>
</feature>
<sequence length="135" mass="15718">MSKFAQKIEKLKKSLLNRLEEQDIVSVDVASKGSVYIGLLGFRQDDRKAVTLYVRGQNPKKKLYVNLDEVDNYIRVFEFLKKHKEELEKIVGKPPKSTSAPDIDELEEEPDEETEEKSEEKTEKKKKESEDEDEL</sequence>
<organism>
    <name type="scientific">Acidianus filamentous virus 1 (isolate United States/Yellowstone)</name>
    <name type="common">AFV-1</name>
    <dbReference type="NCBI Taxonomy" id="654909"/>
    <lineage>
        <taxon>Viruses</taxon>
        <taxon>Adnaviria</taxon>
        <taxon>Zilligvirae</taxon>
        <taxon>Taleaviricota</taxon>
        <taxon>Tokiviricetes</taxon>
        <taxon>Ligamenvirales</taxon>
        <taxon>Ungulaviridae</taxon>
        <taxon>Captovirus</taxon>
        <taxon>Acidianus filamentous virus 1</taxon>
    </lineage>
</organism>